<accession>A5IF70</accession>
<evidence type="ECO:0000255" key="1">
    <source>
        <dbReference type="HAMAP-Rule" id="MF_01961"/>
    </source>
</evidence>
<keyword id="KW-0349">Heme</keyword>
<keyword id="KW-0376">Hydrogen peroxide</keyword>
<keyword id="KW-0408">Iron</keyword>
<keyword id="KW-0479">Metal-binding</keyword>
<keyword id="KW-0560">Oxidoreductase</keyword>
<keyword id="KW-0575">Peroxidase</keyword>
<comment type="function">
    <text evidence="1">Bifunctional enzyme with both catalase and broad-spectrum peroxidase activity.</text>
</comment>
<comment type="catalytic activity">
    <reaction evidence="1">
        <text>H2O2 + AH2 = A + 2 H2O</text>
        <dbReference type="Rhea" id="RHEA:30275"/>
        <dbReference type="ChEBI" id="CHEBI:13193"/>
        <dbReference type="ChEBI" id="CHEBI:15377"/>
        <dbReference type="ChEBI" id="CHEBI:16240"/>
        <dbReference type="ChEBI" id="CHEBI:17499"/>
        <dbReference type="EC" id="1.11.1.21"/>
    </reaction>
</comment>
<comment type="catalytic activity">
    <reaction evidence="1">
        <text>2 H2O2 = O2 + 2 H2O</text>
        <dbReference type="Rhea" id="RHEA:20309"/>
        <dbReference type="ChEBI" id="CHEBI:15377"/>
        <dbReference type="ChEBI" id="CHEBI:15379"/>
        <dbReference type="ChEBI" id="CHEBI:16240"/>
        <dbReference type="EC" id="1.11.1.21"/>
    </reaction>
</comment>
<comment type="cofactor">
    <cofactor evidence="1">
        <name>heme b</name>
        <dbReference type="ChEBI" id="CHEBI:60344"/>
    </cofactor>
    <text evidence="1">Binds 1 heme b (iron(II)-protoporphyrin IX) group per dimer.</text>
</comment>
<comment type="subunit">
    <text evidence="1">Homodimer or homotetramer.</text>
</comment>
<comment type="PTM">
    <text evidence="1">Formation of the three residue Trp-Tyr-Met cross-link is important for the catalase, but not the peroxidase activity of the enzyme.</text>
</comment>
<comment type="similarity">
    <text evidence="1">Belongs to the peroxidase family. Peroxidase/catalase subfamily.</text>
</comment>
<protein>
    <recommendedName>
        <fullName evidence="1">Catalase-peroxidase 1</fullName>
        <shortName evidence="1">CP 1</shortName>
        <ecNumber evidence="1">1.11.1.21</ecNumber>
    </recommendedName>
    <alternativeName>
        <fullName evidence="1">Peroxidase/catalase 1</fullName>
    </alternativeName>
</protein>
<name>KATG1_LEGPC</name>
<dbReference type="EC" id="1.11.1.21" evidence="1"/>
<dbReference type="EMBL" id="CP000675">
    <property type="protein sequence ID" value="ABQ56020.1"/>
    <property type="molecule type" value="Genomic_DNA"/>
</dbReference>
<dbReference type="SMR" id="A5IF70"/>
<dbReference type="KEGG" id="lpc:LPC_2090"/>
<dbReference type="HOGENOM" id="CLU_025424_2_0_6"/>
<dbReference type="GO" id="GO:0005829">
    <property type="term" value="C:cytosol"/>
    <property type="evidence" value="ECO:0007669"/>
    <property type="project" value="TreeGrafter"/>
</dbReference>
<dbReference type="GO" id="GO:0004096">
    <property type="term" value="F:catalase activity"/>
    <property type="evidence" value="ECO:0007669"/>
    <property type="project" value="UniProtKB-UniRule"/>
</dbReference>
<dbReference type="GO" id="GO:0020037">
    <property type="term" value="F:heme binding"/>
    <property type="evidence" value="ECO:0007669"/>
    <property type="project" value="InterPro"/>
</dbReference>
<dbReference type="GO" id="GO:0046872">
    <property type="term" value="F:metal ion binding"/>
    <property type="evidence" value="ECO:0007669"/>
    <property type="project" value="UniProtKB-KW"/>
</dbReference>
<dbReference type="GO" id="GO:0070301">
    <property type="term" value="P:cellular response to hydrogen peroxide"/>
    <property type="evidence" value="ECO:0007669"/>
    <property type="project" value="TreeGrafter"/>
</dbReference>
<dbReference type="GO" id="GO:0042744">
    <property type="term" value="P:hydrogen peroxide catabolic process"/>
    <property type="evidence" value="ECO:0007669"/>
    <property type="project" value="UniProtKB-KW"/>
</dbReference>
<dbReference type="CDD" id="cd00649">
    <property type="entry name" value="catalase_peroxidase_1"/>
    <property type="match status" value="1"/>
</dbReference>
<dbReference type="FunFam" id="1.10.420.10:FF:000004">
    <property type="entry name" value="Catalase-peroxidase"/>
    <property type="match status" value="1"/>
</dbReference>
<dbReference type="FunFam" id="1.10.520.10:FF:000002">
    <property type="entry name" value="Catalase-peroxidase"/>
    <property type="match status" value="1"/>
</dbReference>
<dbReference type="Gene3D" id="1.10.520.10">
    <property type="match status" value="2"/>
</dbReference>
<dbReference type="Gene3D" id="1.10.420.10">
    <property type="entry name" value="Peroxidase, domain 2"/>
    <property type="match status" value="2"/>
</dbReference>
<dbReference type="HAMAP" id="MF_01961">
    <property type="entry name" value="Catal_peroxid"/>
    <property type="match status" value="1"/>
</dbReference>
<dbReference type="InterPro" id="IPR000763">
    <property type="entry name" value="Catalase_peroxidase"/>
</dbReference>
<dbReference type="InterPro" id="IPR002016">
    <property type="entry name" value="Haem_peroxidase"/>
</dbReference>
<dbReference type="InterPro" id="IPR010255">
    <property type="entry name" value="Haem_peroxidase_sf"/>
</dbReference>
<dbReference type="InterPro" id="IPR019794">
    <property type="entry name" value="Peroxidases_AS"/>
</dbReference>
<dbReference type="NCBIfam" id="TIGR00198">
    <property type="entry name" value="cat_per_HPI"/>
    <property type="match status" value="1"/>
</dbReference>
<dbReference type="NCBIfam" id="NF011635">
    <property type="entry name" value="PRK15061.1"/>
    <property type="match status" value="1"/>
</dbReference>
<dbReference type="PANTHER" id="PTHR30555:SF6">
    <property type="entry name" value="CATALASE-PEROXIDASE"/>
    <property type="match status" value="1"/>
</dbReference>
<dbReference type="PANTHER" id="PTHR30555">
    <property type="entry name" value="HYDROPEROXIDASE I, BIFUNCTIONAL CATALASE-PEROXIDASE"/>
    <property type="match status" value="1"/>
</dbReference>
<dbReference type="Pfam" id="PF00141">
    <property type="entry name" value="peroxidase"/>
    <property type="match status" value="2"/>
</dbReference>
<dbReference type="PRINTS" id="PR00460">
    <property type="entry name" value="BPEROXIDASE"/>
</dbReference>
<dbReference type="PRINTS" id="PR00458">
    <property type="entry name" value="PEROXIDASE"/>
</dbReference>
<dbReference type="SUPFAM" id="SSF48113">
    <property type="entry name" value="Heme-dependent peroxidases"/>
    <property type="match status" value="2"/>
</dbReference>
<dbReference type="PROSITE" id="PS00436">
    <property type="entry name" value="PEROXIDASE_2"/>
    <property type="match status" value="1"/>
</dbReference>
<dbReference type="PROSITE" id="PS50873">
    <property type="entry name" value="PEROXIDASE_4"/>
    <property type="match status" value="1"/>
</dbReference>
<gene>
    <name evidence="1" type="primary">katG1</name>
    <name type="ordered locus">LPC_2090</name>
</gene>
<sequence length="721" mass="80488">MDGKVGNTTTGCPVMHGGMTSAGTSNTAWWPNALNLDILHQHDTKTNPMGKDFNYREEVKKLNFEALKKDLHALMTDSQAWWPADWGHYGGLMIRMSWHAAGSYRVADGRGGAGTGNQRFAPLNSWPDNVNLDKARRLLWPIKKKYGNKISWADLIVLAGTIAYESMGLKTFGFGFGREDIWHPEKDVYWGSEQEWLGAKRYDDKDRQSLETPLAAVQMGLIYVNPEGVNGQPDPLRTAQDVRVTFGRMAMNDEETVALTAGGHTVGKCHGNGNAKFLGPEPEAADIEDQGLGWINKTTRGIGRNTVSSGIEGAWTTHPTQWDNGYFYLLLNYDWELKKSPAGAWQWEPIHIKEEDKPVDVEDPAIRHNPIMTDADMAIKMDPVYRKIAERFYKDPDYFAEVFARAWFKLTHRDMGPKTRYIGPDVPKEDLIWQDPVPAGNRAYDIAAAKAKIAASNLTIGEMVSTAWDSARTFRGSDKRGGANGARIRLKPQKDWEGNEPQRLTKVLRILEDIAADTGASVADVIVLAGNVGIEKAAKAAGFDIIVPFAPGRGDATDDMTDAESFDVLEPLHDGYRNWLKKAYDVRPEELMLDRTQLMGLTAHEMTVLVGGLRVLGTNHNNTQHGVFTDRVGALTNDFFVNLTDMANVWIPSKDNLYEIRDRKAGNIKWTATRVDLVFGSNSILRSYAEVYAQDDNKGKFIQDFVAAWTKVMNADRFDLA</sequence>
<reference key="1">
    <citation type="submission" date="2006-11" db="EMBL/GenBank/DDBJ databases">
        <title>Identification and characterization of a new conjugation/ type IVA secretion system (trb/tra) of L. pneumophila Corby localized on a mobile genomic island.</title>
        <authorList>
            <person name="Gloeckner G."/>
            <person name="Albert-Weissenberger C."/>
            <person name="Weinmann E."/>
            <person name="Jacobi S."/>
            <person name="Schunder E."/>
            <person name="Steinert M."/>
            <person name="Buchrieser C."/>
            <person name="Hacker J."/>
            <person name="Heuner K."/>
        </authorList>
    </citation>
    <scope>NUCLEOTIDE SEQUENCE [LARGE SCALE GENOMIC DNA]</scope>
    <source>
        <strain>Corby</strain>
    </source>
</reference>
<feature type="chain" id="PRO_0000354816" description="Catalase-peroxidase 1">
    <location>
        <begin position="1"/>
        <end position="721"/>
    </location>
</feature>
<feature type="active site" description="Proton acceptor" evidence="1">
    <location>
        <position position="99"/>
    </location>
</feature>
<feature type="binding site" description="axial binding residue" evidence="1">
    <location>
        <position position="264"/>
    </location>
    <ligand>
        <name>heme b</name>
        <dbReference type="ChEBI" id="CHEBI:60344"/>
    </ligand>
    <ligandPart>
        <name>Fe</name>
        <dbReference type="ChEBI" id="CHEBI:18248"/>
    </ligandPart>
</feature>
<feature type="site" description="Transition state stabilizer" evidence="1">
    <location>
        <position position="95"/>
    </location>
</feature>
<feature type="cross-link" description="Tryptophyl-tyrosyl-methioninium (Trp-Tyr) (with M-249)" evidence="1">
    <location>
        <begin position="98"/>
        <end position="223"/>
    </location>
</feature>
<feature type="cross-link" description="Tryptophyl-tyrosyl-methioninium (Tyr-Met) (with W-98)" evidence="1">
    <location>
        <begin position="223"/>
        <end position="249"/>
    </location>
</feature>
<organism>
    <name type="scientific">Legionella pneumophila (strain Corby)</name>
    <dbReference type="NCBI Taxonomy" id="400673"/>
    <lineage>
        <taxon>Bacteria</taxon>
        <taxon>Pseudomonadati</taxon>
        <taxon>Pseudomonadota</taxon>
        <taxon>Gammaproteobacteria</taxon>
        <taxon>Legionellales</taxon>
        <taxon>Legionellaceae</taxon>
        <taxon>Legionella</taxon>
    </lineage>
</organism>
<proteinExistence type="inferred from homology"/>